<gene>
    <name evidence="2" type="primary">BGLAP</name>
</gene>
<dbReference type="SMR" id="P86314"/>
<dbReference type="Proteomes" id="UP000694950">
    <property type="component" value="Unplaced"/>
</dbReference>
<dbReference type="GO" id="GO:0005737">
    <property type="term" value="C:cytoplasm"/>
    <property type="evidence" value="ECO:0000250"/>
    <property type="project" value="UniProtKB"/>
</dbReference>
<dbReference type="GO" id="GO:0005576">
    <property type="term" value="C:extracellular region"/>
    <property type="evidence" value="ECO:0007669"/>
    <property type="project" value="UniProtKB-SubCell"/>
</dbReference>
<dbReference type="GO" id="GO:0005509">
    <property type="term" value="F:calcium ion binding"/>
    <property type="evidence" value="ECO:0007669"/>
    <property type="project" value="InterPro"/>
</dbReference>
<dbReference type="GO" id="GO:0005179">
    <property type="term" value="F:hormone activity"/>
    <property type="evidence" value="ECO:0000250"/>
    <property type="project" value="UniProtKB"/>
</dbReference>
<dbReference type="GO" id="GO:0046848">
    <property type="term" value="F:hydroxyapatite binding"/>
    <property type="evidence" value="ECO:0007669"/>
    <property type="project" value="TreeGrafter"/>
</dbReference>
<dbReference type="GO" id="GO:0008147">
    <property type="term" value="F:structural constituent of bone"/>
    <property type="evidence" value="ECO:0000250"/>
    <property type="project" value="UniProtKB"/>
</dbReference>
<dbReference type="GO" id="GO:0031214">
    <property type="term" value="P:biomineral tissue development"/>
    <property type="evidence" value="ECO:0007669"/>
    <property type="project" value="UniProtKB-KW"/>
</dbReference>
<dbReference type="GO" id="GO:0060348">
    <property type="term" value="P:bone development"/>
    <property type="evidence" value="ECO:0007669"/>
    <property type="project" value="InterPro"/>
</dbReference>
<dbReference type="GO" id="GO:0007420">
    <property type="term" value="P:brain development"/>
    <property type="evidence" value="ECO:0000250"/>
    <property type="project" value="UniProtKB"/>
</dbReference>
<dbReference type="GO" id="GO:0032869">
    <property type="term" value="P:cellular response to insulin stimulus"/>
    <property type="evidence" value="ECO:0000250"/>
    <property type="project" value="UniProtKB"/>
</dbReference>
<dbReference type="GO" id="GO:0050890">
    <property type="term" value="P:cognition"/>
    <property type="evidence" value="ECO:0000250"/>
    <property type="project" value="UniProtKB"/>
</dbReference>
<dbReference type="GO" id="GO:0042593">
    <property type="term" value="P:glucose homeostasis"/>
    <property type="evidence" value="ECO:0000250"/>
    <property type="project" value="UniProtKB"/>
</dbReference>
<dbReference type="GO" id="GO:0007611">
    <property type="term" value="P:learning or memory"/>
    <property type="evidence" value="ECO:0000250"/>
    <property type="project" value="UniProtKB"/>
</dbReference>
<dbReference type="GO" id="GO:1903011">
    <property type="term" value="P:negative regulation of bone development"/>
    <property type="evidence" value="ECO:0000250"/>
    <property type="project" value="UniProtKB"/>
</dbReference>
<dbReference type="GO" id="GO:0001649">
    <property type="term" value="P:osteoblast differentiation"/>
    <property type="evidence" value="ECO:0007669"/>
    <property type="project" value="TreeGrafter"/>
</dbReference>
<dbReference type="GO" id="GO:0001956">
    <property type="term" value="P:positive regulation of neurotransmitter secretion"/>
    <property type="evidence" value="ECO:0000250"/>
    <property type="project" value="UniProtKB"/>
</dbReference>
<dbReference type="GO" id="GO:0030500">
    <property type="term" value="P:regulation of bone mineralization"/>
    <property type="evidence" value="ECO:0007669"/>
    <property type="project" value="InterPro"/>
</dbReference>
<dbReference type="GO" id="GO:1900076">
    <property type="term" value="P:regulation of cellular response to insulin stimulus"/>
    <property type="evidence" value="ECO:0007669"/>
    <property type="project" value="InterPro"/>
</dbReference>
<dbReference type="GO" id="GO:2000224">
    <property type="term" value="P:regulation of testosterone biosynthetic process"/>
    <property type="evidence" value="ECO:0000250"/>
    <property type="project" value="UniProtKB"/>
</dbReference>
<dbReference type="GO" id="GO:0032571">
    <property type="term" value="P:response to vitamin K"/>
    <property type="evidence" value="ECO:0007669"/>
    <property type="project" value="InterPro"/>
</dbReference>
<dbReference type="GO" id="GO:0044342">
    <property type="term" value="P:type B pancreatic cell proliferation"/>
    <property type="evidence" value="ECO:0000250"/>
    <property type="project" value="UniProtKB"/>
</dbReference>
<dbReference type="InterPro" id="IPR035972">
    <property type="entry name" value="GLA-like_dom_SF"/>
</dbReference>
<dbReference type="InterPro" id="IPR000294">
    <property type="entry name" value="GLA_domain"/>
</dbReference>
<dbReference type="InterPro" id="IPR039176">
    <property type="entry name" value="Osteocalcin"/>
</dbReference>
<dbReference type="InterPro" id="IPR002384">
    <property type="entry name" value="Osteocalcin/MGP"/>
</dbReference>
<dbReference type="PANTHER" id="PTHR14235">
    <property type="entry name" value="OSTEOCALCIN"/>
    <property type="match status" value="1"/>
</dbReference>
<dbReference type="PANTHER" id="PTHR14235:SF0">
    <property type="entry name" value="OSTEOCALCIN"/>
    <property type="match status" value="1"/>
</dbReference>
<dbReference type="PRINTS" id="PR00002">
    <property type="entry name" value="GLABONE"/>
</dbReference>
<dbReference type="SMART" id="SM00069">
    <property type="entry name" value="GLA"/>
    <property type="match status" value="1"/>
</dbReference>
<dbReference type="SUPFAM" id="SSF57630">
    <property type="entry name" value="GLA-domain"/>
    <property type="match status" value="1"/>
</dbReference>
<dbReference type="PROSITE" id="PS00011">
    <property type="entry name" value="GLA_1"/>
    <property type="match status" value="1"/>
</dbReference>
<dbReference type="PROSITE" id="PS50998">
    <property type="entry name" value="GLA_2"/>
    <property type="match status" value="1"/>
</dbReference>
<feature type="chain" id="PRO_0000378903" description="Osteocalcin">
    <location>
        <begin position="1"/>
        <end position="49"/>
    </location>
</feature>
<feature type="domain" description="Gla" evidence="6">
    <location>
        <begin position="1"/>
        <end position="47"/>
    </location>
</feature>
<feature type="binding site" evidence="2">
    <location>
        <position position="17"/>
    </location>
    <ligand>
        <name>Ca(2+)</name>
        <dbReference type="ChEBI" id="CHEBI:29108"/>
        <label>1</label>
    </ligand>
</feature>
<feature type="binding site" evidence="2">
    <location>
        <position position="21"/>
    </location>
    <ligand>
        <name>Ca(2+)</name>
        <dbReference type="ChEBI" id="CHEBI:29108"/>
        <label>2</label>
    </ligand>
</feature>
<feature type="binding site" evidence="2">
    <location>
        <position position="24"/>
    </location>
    <ligand>
        <name>Ca(2+)</name>
        <dbReference type="ChEBI" id="CHEBI:29108"/>
        <label>2</label>
    </ligand>
</feature>
<feature type="binding site" evidence="2">
    <location>
        <position position="24"/>
    </location>
    <ligand>
        <name>Ca(2+)</name>
        <dbReference type="ChEBI" id="CHEBI:29108"/>
        <label>3</label>
    </ligand>
</feature>
<feature type="binding site" evidence="2">
    <location>
        <position position="30"/>
    </location>
    <ligand>
        <name>Ca(2+)</name>
        <dbReference type="ChEBI" id="CHEBI:29108"/>
        <label>3</label>
    </ligand>
</feature>
<feature type="modified residue" description="4-hydroxyproline" evidence="7">
    <location>
        <position position="9"/>
    </location>
</feature>
<feature type="modified residue" description="4-carboxyglutamate" evidence="1 6">
    <location>
        <position position="17"/>
    </location>
</feature>
<feature type="modified residue" description="4-carboxyglutamate" evidence="3 6">
    <location>
        <position position="21"/>
    </location>
</feature>
<feature type="modified residue" description="4-carboxyglutamate" evidence="3 6">
    <location>
        <position position="24"/>
    </location>
</feature>
<feature type="disulfide bond" evidence="6 7">
    <location>
        <begin position="23"/>
        <end position="29"/>
    </location>
</feature>
<name>OSTCN_CAMBA</name>
<organism>
    <name type="scientific">Camelus bactrianus</name>
    <name type="common">Bactrian camel</name>
    <dbReference type="NCBI Taxonomy" id="9837"/>
    <lineage>
        <taxon>Eukaryota</taxon>
        <taxon>Metazoa</taxon>
        <taxon>Chordata</taxon>
        <taxon>Craniata</taxon>
        <taxon>Vertebrata</taxon>
        <taxon>Euteleostomi</taxon>
        <taxon>Mammalia</taxon>
        <taxon>Eutheria</taxon>
        <taxon>Laurasiatheria</taxon>
        <taxon>Artiodactyla</taxon>
        <taxon>Tylopoda</taxon>
        <taxon>Camelidae</taxon>
        <taxon>Camelus</taxon>
    </lineage>
</organism>
<reference evidence="9" key="1">
    <citation type="journal article" date="2007" name="Geochim. Cosmochim. Acta">
        <title>Investigation of the protein osteocalcin of Camelops hesternus: Sequence, structure and phylogenetic implications.</title>
        <authorList>
            <person name="Humpula J.F."/>
            <person name="Ostrom P.H."/>
            <person name="Gandhi H."/>
            <person name="Strahler J.R."/>
            <person name="Walker A.K."/>
            <person name="Stafford T.W. Jr."/>
            <person name="Smith J.J."/>
            <person name="Voorhies M.R."/>
            <person name="Corner R.G."/>
            <person name="Andrews P.C."/>
        </authorList>
    </citation>
    <scope>PROTEIN SEQUENCE</scope>
    <scope>HYDROXYLATION AT PRO-9</scope>
    <scope>DISULFIDE BOND</scope>
    <source>
        <tissue evidence="7">Bone</tissue>
    </source>
</reference>
<evidence type="ECO:0000250" key="1">
    <source>
        <dbReference type="UniProtKB" id="P02818"/>
    </source>
</evidence>
<evidence type="ECO:0000250" key="2">
    <source>
        <dbReference type="UniProtKB" id="P02820"/>
    </source>
</evidence>
<evidence type="ECO:0000250" key="3">
    <source>
        <dbReference type="UniProtKB" id="P83489"/>
    </source>
</evidence>
<evidence type="ECO:0000250" key="4">
    <source>
        <dbReference type="UniProtKB" id="P86546"/>
    </source>
</evidence>
<evidence type="ECO:0000255" key="5"/>
<evidence type="ECO:0000255" key="6">
    <source>
        <dbReference type="PROSITE-ProRule" id="PRU00463"/>
    </source>
</evidence>
<evidence type="ECO:0000269" key="7">
    <source ref="1"/>
</evidence>
<evidence type="ECO:0000303" key="8">
    <source ref="1"/>
</evidence>
<evidence type="ECO:0000305" key="9"/>
<keyword id="KW-0091">Biomineralization</keyword>
<keyword id="KW-0106">Calcium</keyword>
<keyword id="KW-0903">Direct protein sequencing</keyword>
<keyword id="KW-1015">Disulfide bond</keyword>
<keyword id="KW-0301">Gamma-carboxyglutamic acid</keyword>
<keyword id="KW-0372">Hormone</keyword>
<keyword id="KW-0379">Hydroxylation</keyword>
<keyword id="KW-0479">Metal-binding</keyword>
<keyword id="KW-1185">Reference proteome</keyword>
<keyword id="KW-0964">Secreted</keyword>
<proteinExistence type="evidence at protein level"/>
<comment type="function">
    <text evidence="4">The carboxylated form is one of the main organic components of the bone matrix, which constitutes 1-2% of the total bone protein: it acts as a negative regulator of bone formation and is required to limit bone formation without impairing bone resorption or mineralization. The carboxylated form binds strongly to apatite and calcium.</text>
</comment>
<comment type="function">
    <text evidence="4">The uncarboxylated form acts as a hormone secreted by osteoblasts, which regulates different cellular processes, such as energy metabolism, male fertility and brain development. Regulates of energy metabolism by acting as a hormone favoring pancreatic beta-cell proliferation, insulin secretion and sensitivity and energy expenditure. Uncarboxylated osteocalcin hormone also promotes testosterone production in the testes: acts as a ligand for G protein-coupled receptor GPRC6A at the surface of Leydig cells, initiating a signaling response that promotes the expression of enzymes required for testosterone synthesis in a CREB-dependent manner. Also acts as a regulator of brain development: osteocalcin hormone crosses the blood-brain barrier and acts as a ligand for GPR158 on neurons, initiating a signaling response that prevents neuronal apoptosis in the hippocampus, favors the synthesis of all monoamine neurotransmitters and inhibits that of gamma-aminobutyric acid (GABA). Osteocalcin also crosses the placenta during pregnancy and maternal osteocalcin is required for fetal brain development.</text>
</comment>
<comment type="subcellular location">
    <subcellularLocation>
        <location evidence="2">Secreted</location>
    </subcellularLocation>
</comment>
<comment type="PTM">
    <text evidence="2">Gamma-carboxyglutamic acid residues are formed by vitamin K dependent carboxylation. These residues are essential for the binding of calcium (By similarity).</text>
</comment>
<comment type="similarity">
    <text evidence="5">Belongs to the osteocalcin/matrix Gla protein family.</text>
</comment>
<sequence length="49" mass="5592">YLDHGLGAPAPYVDPLEPKREVCELNPDCDELADQMGFQEAYRRFYGTT</sequence>
<accession>P86314</accession>
<protein>
    <recommendedName>
        <fullName evidence="8">Osteocalcin</fullName>
    </recommendedName>
    <alternativeName>
        <fullName evidence="2">Bone Gla protein</fullName>
        <shortName evidence="2">BGP</shortName>
    </alternativeName>
    <alternativeName>
        <fullName evidence="2">Gamma-carboxyglutamic acid-containing protein</fullName>
    </alternativeName>
</protein>